<name>ATPL_CLOBH</name>
<organism>
    <name type="scientific">Clostridium botulinum (strain Hall / ATCC 3502 / NCTC 13319 / Type A)</name>
    <dbReference type="NCBI Taxonomy" id="441771"/>
    <lineage>
        <taxon>Bacteria</taxon>
        <taxon>Bacillati</taxon>
        <taxon>Bacillota</taxon>
        <taxon>Clostridia</taxon>
        <taxon>Eubacteriales</taxon>
        <taxon>Clostridiaceae</taxon>
        <taxon>Clostridium</taxon>
    </lineage>
</organism>
<dbReference type="EMBL" id="CP000727">
    <property type="protein sequence ID" value="ABS36053.1"/>
    <property type="molecule type" value="Genomic_DNA"/>
</dbReference>
<dbReference type="EMBL" id="AM412317">
    <property type="protein sequence ID" value="CAL81706.1"/>
    <property type="molecule type" value="Genomic_DNA"/>
</dbReference>
<dbReference type="RefSeq" id="WP_003356112.1">
    <property type="nucleotide sequence ID" value="NC_009698.1"/>
</dbReference>
<dbReference type="RefSeq" id="YP_001252698.1">
    <property type="nucleotide sequence ID" value="NC_009495.1"/>
</dbReference>
<dbReference type="RefSeq" id="YP_001386110.1">
    <property type="nucleotide sequence ID" value="NC_009698.1"/>
</dbReference>
<dbReference type="SMR" id="A5HY47"/>
<dbReference type="GeneID" id="92936949"/>
<dbReference type="KEGG" id="cbh:CLC_0199"/>
<dbReference type="KEGG" id="cbo:CBO0151"/>
<dbReference type="PATRIC" id="fig|413999.7.peg.150"/>
<dbReference type="HOGENOM" id="CLU_148047_2_0_9"/>
<dbReference type="PRO" id="PR:A5HY47"/>
<dbReference type="Proteomes" id="UP000001986">
    <property type="component" value="Chromosome"/>
</dbReference>
<dbReference type="GO" id="GO:0005886">
    <property type="term" value="C:plasma membrane"/>
    <property type="evidence" value="ECO:0007669"/>
    <property type="project" value="UniProtKB-SubCell"/>
</dbReference>
<dbReference type="GO" id="GO:0045259">
    <property type="term" value="C:proton-transporting ATP synthase complex"/>
    <property type="evidence" value="ECO:0007669"/>
    <property type="project" value="UniProtKB-KW"/>
</dbReference>
<dbReference type="GO" id="GO:0033177">
    <property type="term" value="C:proton-transporting two-sector ATPase complex, proton-transporting domain"/>
    <property type="evidence" value="ECO:0007669"/>
    <property type="project" value="InterPro"/>
</dbReference>
<dbReference type="GO" id="GO:0008289">
    <property type="term" value="F:lipid binding"/>
    <property type="evidence" value="ECO:0007669"/>
    <property type="project" value="UniProtKB-KW"/>
</dbReference>
<dbReference type="GO" id="GO:0046933">
    <property type="term" value="F:proton-transporting ATP synthase activity, rotational mechanism"/>
    <property type="evidence" value="ECO:0007669"/>
    <property type="project" value="UniProtKB-UniRule"/>
</dbReference>
<dbReference type="GO" id="GO:0015986">
    <property type="term" value="P:proton motive force-driven ATP synthesis"/>
    <property type="evidence" value="ECO:0000318"/>
    <property type="project" value="GO_Central"/>
</dbReference>
<dbReference type="CDD" id="cd18184">
    <property type="entry name" value="ATP-synt_Fo_c_NaATPase"/>
    <property type="match status" value="1"/>
</dbReference>
<dbReference type="FunFam" id="1.20.20.10:FF:000001">
    <property type="entry name" value="ATP synthase subunit c, chloroplastic"/>
    <property type="match status" value="1"/>
</dbReference>
<dbReference type="Gene3D" id="1.20.20.10">
    <property type="entry name" value="F1F0 ATP synthase subunit C"/>
    <property type="match status" value="1"/>
</dbReference>
<dbReference type="HAMAP" id="MF_01396">
    <property type="entry name" value="ATP_synth_c_bact"/>
    <property type="match status" value="1"/>
</dbReference>
<dbReference type="InterPro" id="IPR005953">
    <property type="entry name" value="ATP_synth_csu_bac/chlpt"/>
</dbReference>
<dbReference type="InterPro" id="IPR000454">
    <property type="entry name" value="ATP_synth_F0_csu"/>
</dbReference>
<dbReference type="InterPro" id="IPR020537">
    <property type="entry name" value="ATP_synth_F0_csu_DDCD_BS"/>
</dbReference>
<dbReference type="InterPro" id="IPR038662">
    <property type="entry name" value="ATP_synth_F0_csu_sf"/>
</dbReference>
<dbReference type="InterPro" id="IPR002379">
    <property type="entry name" value="ATPase_proteolipid_c-like_dom"/>
</dbReference>
<dbReference type="InterPro" id="IPR035921">
    <property type="entry name" value="F/V-ATP_Csub_sf"/>
</dbReference>
<dbReference type="NCBIfam" id="TIGR01260">
    <property type="entry name" value="ATP_synt_c"/>
    <property type="match status" value="1"/>
</dbReference>
<dbReference type="PANTHER" id="PTHR10031">
    <property type="entry name" value="ATP SYNTHASE LIPID-BINDING PROTEIN, MITOCHONDRIAL"/>
    <property type="match status" value="1"/>
</dbReference>
<dbReference type="PANTHER" id="PTHR10031:SF0">
    <property type="entry name" value="ATPASE PROTEIN 9"/>
    <property type="match status" value="1"/>
</dbReference>
<dbReference type="Pfam" id="PF00137">
    <property type="entry name" value="ATP-synt_C"/>
    <property type="match status" value="1"/>
</dbReference>
<dbReference type="PRINTS" id="PR00124">
    <property type="entry name" value="ATPASEC"/>
</dbReference>
<dbReference type="SUPFAM" id="SSF81333">
    <property type="entry name" value="F1F0 ATP synthase subunit C"/>
    <property type="match status" value="1"/>
</dbReference>
<dbReference type="PROSITE" id="PS00605">
    <property type="entry name" value="ATPASE_C"/>
    <property type="match status" value="1"/>
</dbReference>
<comment type="function">
    <text evidence="1">F(1)F(0) ATP synthase produces ATP from ADP in the presence of a proton or sodium gradient. F-type ATPases consist of two structural domains, F(1) containing the extramembraneous catalytic core and F(0) containing the membrane proton channel, linked together by a central stalk and a peripheral stalk. During catalysis, ATP synthesis in the catalytic domain of F(1) is coupled via a rotary mechanism of the central stalk subunits to proton translocation.</text>
</comment>
<comment type="function">
    <text evidence="1">Key component of the F(0) channel; it plays a direct role in translocation across the membrane. A homomeric c-ring of between 10-14 subunits forms the central stalk rotor element with the F(1) delta and epsilon subunits.</text>
</comment>
<comment type="subunit">
    <text evidence="1">F-type ATPases have 2 components, F(1) - the catalytic core - and F(0) - the membrane proton channel. F(1) has five subunits: alpha(3), beta(3), gamma(1), delta(1), epsilon(1). F(0) has three main subunits: a(1), b(2) and c(10-14). The alpha and beta chains form an alternating ring which encloses part of the gamma chain. F(1) is attached to F(0) by a central stalk formed by the gamma and epsilon chains, while a peripheral stalk is formed by the delta and b chains.</text>
</comment>
<comment type="subcellular location">
    <subcellularLocation>
        <location evidence="1">Cell membrane</location>
        <topology evidence="1">Multi-pass membrane protein</topology>
    </subcellularLocation>
</comment>
<comment type="similarity">
    <text evidence="1">Belongs to the ATPase C chain family.</text>
</comment>
<accession>A5HY47</accession>
<accession>A7G067</accession>
<sequence>MDPKAFVSGMAALGAGIAALACIGAGIGTGNATGKAVEGVSRQPEASGKIMSTLVIGSAFSEATAIYGLIIALFLIFKI</sequence>
<protein>
    <recommendedName>
        <fullName evidence="1">ATP synthase subunit c</fullName>
    </recommendedName>
    <alternativeName>
        <fullName evidence="1">ATP synthase F(0) sector subunit c</fullName>
    </alternativeName>
    <alternativeName>
        <fullName evidence="1">F-type ATPase subunit c</fullName>
        <shortName evidence="1">F-ATPase subunit c</shortName>
    </alternativeName>
    <alternativeName>
        <fullName evidence="1">Lipid-binding protein</fullName>
    </alternativeName>
</protein>
<proteinExistence type="inferred from homology"/>
<feature type="chain" id="PRO_5000246412" description="ATP synthase subunit c">
    <location>
        <begin position="1"/>
        <end position="79"/>
    </location>
</feature>
<feature type="transmembrane region" description="Helical" evidence="1">
    <location>
        <begin position="7"/>
        <end position="27"/>
    </location>
</feature>
<feature type="transmembrane region" description="Helical" evidence="1">
    <location>
        <begin position="56"/>
        <end position="76"/>
    </location>
</feature>
<feature type="site" description="Reversibly protonated during proton transport" evidence="1">
    <location>
        <position position="62"/>
    </location>
</feature>
<evidence type="ECO:0000255" key="1">
    <source>
        <dbReference type="HAMAP-Rule" id="MF_01396"/>
    </source>
</evidence>
<reference key="1">
    <citation type="journal article" date="2007" name="Genome Res.">
        <title>Genome sequence of a proteolytic (Group I) Clostridium botulinum strain Hall A and comparative analysis of the clostridial genomes.</title>
        <authorList>
            <person name="Sebaihia M."/>
            <person name="Peck M.W."/>
            <person name="Minton N.P."/>
            <person name="Thomson N.R."/>
            <person name="Holden M.T.G."/>
            <person name="Mitchell W.J."/>
            <person name="Carter A.T."/>
            <person name="Bentley S.D."/>
            <person name="Mason D.R."/>
            <person name="Crossman L."/>
            <person name="Paul C.J."/>
            <person name="Ivens A."/>
            <person name="Wells-Bennik M.H.J."/>
            <person name="Davis I.J."/>
            <person name="Cerdeno-Tarraga A.M."/>
            <person name="Churcher C."/>
            <person name="Quail M.A."/>
            <person name="Chillingworth T."/>
            <person name="Feltwell T."/>
            <person name="Fraser A."/>
            <person name="Goodhead I."/>
            <person name="Hance Z."/>
            <person name="Jagels K."/>
            <person name="Larke N."/>
            <person name="Maddison M."/>
            <person name="Moule S."/>
            <person name="Mungall K."/>
            <person name="Norbertczak H."/>
            <person name="Rabbinowitsch E."/>
            <person name="Sanders M."/>
            <person name="Simmonds M."/>
            <person name="White B."/>
            <person name="Whithead S."/>
            <person name="Parkhill J."/>
        </authorList>
    </citation>
    <scope>NUCLEOTIDE SEQUENCE [LARGE SCALE GENOMIC DNA]</scope>
    <source>
        <strain>Hall / ATCC 3502 / NCTC 13319 / Type A</strain>
    </source>
</reference>
<reference key="2">
    <citation type="journal article" date="2007" name="PLoS ONE">
        <title>Analysis of the neurotoxin complex genes in Clostridium botulinum A1-A4 and B1 strains: BoNT/A3, /Ba4 and /B1 clusters are located within plasmids.</title>
        <authorList>
            <person name="Smith T.J."/>
            <person name="Hill K.K."/>
            <person name="Foley B.T."/>
            <person name="Detter J.C."/>
            <person name="Munk A.C."/>
            <person name="Bruce D.C."/>
            <person name="Doggett N.A."/>
            <person name="Smith L.A."/>
            <person name="Marks J.D."/>
            <person name="Xie G."/>
            <person name="Brettin T.S."/>
        </authorList>
    </citation>
    <scope>NUCLEOTIDE SEQUENCE [LARGE SCALE GENOMIC DNA]</scope>
    <source>
        <strain>Hall / ATCC 3502 / NCTC 13319 / Type A</strain>
    </source>
</reference>
<gene>
    <name evidence="1" type="primary">atpE</name>
    <name type="ordered locus">CBO0151</name>
    <name type="ordered locus">CLC_0199</name>
</gene>
<keyword id="KW-0066">ATP synthesis</keyword>
<keyword id="KW-1003">Cell membrane</keyword>
<keyword id="KW-0138">CF(0)</keyword>
<keyword id="KW-0375">Hydrogen ion transport</keyword>
<keyword id="KW-0406">Ion transport</keyword>
<keyword id="KW-0446">Lipid-binding</keyword>
<keyword id="KW-0472">Membrane</keyword>
<keyword id="KW-1185">Reference proteome</keyword>
<keyword id="KW-0812">Transmembrane</keyword>
<keyword id="KW-1133">Transmembrane helix</keyword>
<keyword id="KW-0813">Transport</keyword>